<evidence type="ECO:0000255" key="1">
    <source>
        <dbReference type="HAMAP-Rule" id="MF_01320"/>
    </source>
</evidence>
<evidence type="ECO:0000256" key="2">
    <source>
        <dbReference type="SAM" id="MobiDB-lite"/>
    </source>
</evidence>
<evidence type="ECO:0000305" key="3"/>
<gene>
    <name evidence="1" type="primary">rplB</name>
    <name type="ordered locus">PAM_203</name>
</gene>
<dbReference type="EMBL" id="AP006628">
    <property type="protein sequence ID" value="BAD04288.1"/>
    <property type="molecule type" value="Genomic_DNA"/>
</dbReference>
<dbReference type="SMR" id="P60402"/>
<dbReference type="STRING" id="262768.PAM_203"/>
<dbReference type="KEGG" id="poy:PAM_203"/>
<dbReference type="eggNOG" id="COG0090">
    <property type="taxonomic scope" value="Bacteria"/>
</dbReference>
<dbReference type="HOGENOM" id="CLU_036235_2_1_14"/>
<dbReference type="BioCyc" id="OYEL262768:G1G26-249-MONOMER"/>
<dbReference type="Proteomes" id="UP000002523">
    <property type="component" value="Chromosome"/>
</dbReference>
<dbReference type="GO" id="GO:0015934">
    <property type="term" value="C:large ribosomal subunit"/>
    <property type="evidence" value="ECO:0007669"/>
    <property type="project" value="InterPro"/>
</dbReference>
<dbReference type="GO" id="GO:0019843">
    <property type="term" value="F:rRNA binding"/>
    <property type="evidence" value="ECO:0007669"/>
    <property type="project" value="UniProtKB-UniRule"/>
</dbReference>
<dbReference type="GO" id="GO:0003735">
    <property type="term" value="F:structural constituent of ribosome"/>
    <property type="evidence" value="ECO:0007669"/>
    <property type="project" value="InterPro"/>
</dbReference>
<dbReference type="GO" id="GO:0016740">
    <property type="term" value="F:transferase activity"/>
    <property type="evidence" value="ECO:0007669"/>
    <property type="project" value="InterPro"/>
</dbReference>
<dbReference type="GO" id="GO:0002181">
    <property type="term" value="P:cytoplasmic translation"/>
    <property type="evidence" value="ECO:0007669"/>
    <property type="project" value="TreeGrafter"/>
</dbReference>
<dbReference type="FunFam" id="2.30.30.30:FF:000001">
    <property type="entry name" value="50S ribosomal protein L2"/>
    <property type="match status" value="1"/>
</dbReference>
<dbReference type="FunFam" id="2.40.50.140:FF:000003">
    <property type="entry name" value="50S ribosomal protein L2"/>
    <property type="match status" value="1"/>
</dbReference>
<dbReference type="FunFam" id="4.10.950.10:FF:000001">
    <property type="entry name" value="50S ribosomal protein L2"/>
    <property type="match status" value="1"/>
</dbReference>
<dbReference type="Gene3D" id="2.30.30.30">
    <property type="match status" value="1"/>
</dbReference>
<dbReference type="Gene3D" id="2.40.50.140">
    <property type="entry name" value="Nucleic acid-binding proteins"/>
    <property type="match status" value="1"/>
</dbReference>
<dbReference type="Gene3D" id="4.10.950.10">
    <property type="entry name" value="Ribosomal protein L2, domain 3"/>
    <property type="match status" value="1"/>
</dbReference>
<dbReference type="HAMAP" id="MF_01320_B">
    <property type="entry name" value="Ribosomal_uL2_B"/>
    <property type="match status" value="1"/>
</dbReference>
<dbReference type="InterPro" id="IPR012340">
    <property type="entry name" value="NA-bd_OB-fold"/>
</dbReference>
<dbReference type="InterPro" id="IPR014722">
    <property type="entry name" value="Rib_uL2_dom2"/>
</dbReference>
<dbReference type="InterPro" id="IPR002171">
    <property type="entry name" value="Ribosomal_uL2"/>
</dbReference>
<dbReference type="InterPro" id="IPR005880">
    <property type="entry name" value="Ribosomal_uL2_bac/org-type"/>
</dbReference>
<dbReference type="InterPro" id="IPR022669">
    <property type="entry name" value="Ribosomal_uL2_C"/>
</dbReference>
<dbReference type="InterPro" id="IPR022671">
    <property type="entry name" value="Ribosomal_uL2_CS"/>
</dbReference>
<dbReference type="InterPro" id="IPR014726">
    <property type="entry name" value="Ribosomal_uL2_dom3"/>
</dbReference>
<dbReference type="InterPro" id="IPR022666">
    <property type="entry name" value="Ribosomal_uL2_RNA-bd_dom"/>
</dbReference>
<dbReference type="InterPro" id="IPR008991">
    <property type="entry name" value="Translation_prot_SH3-like_sf"/>
</dbReference>
<dbReference type="NCBIfam" id="TIGR01171">
    <property type="entry name" value="rplB_bact"/>
    <property type="match status" value="1"/>
</dbReference>
<dbReference type="PANTHER" id="PTHR13691:SF5">
    <property type="entry name" value="LARGE RIBOSOMAL SUBUNIT PROTEIN UL2M"/>
    <property type="match status" value="1"/>
</dbReference>
<dbReference type="PANTHER" id="PTHR13691">
    <property type="entry name" value="RIBOSOMAL PROTEIN L2"/>
    <property type="match status" value="1"/>
</dbReference>
<dbReference type="Pfam" id="PF00181">
    <property type="entry name" value="Ribosomal_L2"/>
    <property type="match status" value="1"/>
</dbReference>
<dbReference type="Pfam" id="PF03947">
    <property type="entry name" value="Ribosomal_L2_C"/>
    <property type="match status" value="1"/>
</dbReference>
<dbReference type="PIRSF" id="PIRSF002158">
    <property type="entry name" value="Ribosomal_L2"/>
    <property type="match status" value="1"/>
</dbReference>
<dbReference type="SMART" id="SM01383">
    <property type="entry name" value="Ribosomal_L2"/>
    <property type="match status" value="1"/>
</dbReference>
<dbReference type="SMART" id="SM01382">
    <property type="entry name" value="Ribosomal_L2_C"/>
    <property type="match status" value="1"/>
</dbReference>
<dbReference type="SUPFAM" id="SSF50249">
    <property type="entry name" value="Nucleic acid-binding proteins"/>
    <property type="match status" value="1"/>
</dbReference>
<dbReference type="SUPFAM" id="SSF50104">
    <property type="entry name" value="Translation proteins SH3-like domain"/>
    <property type="match status" value="1"/>
</dbReference>
<dbReference type="PROSITE" id="PS00467">
    <property type="entry name" value="RIBOSOMAL_L2"/>
    <property type="match status" value="1"/>
</dbReference>
<name>RL2_ONYPE</name>
<reference key="1">
    <citation type="journal article" date="2004" name="Nat. Genet.">
        <title>Reductive evolution suggested from the complete genome sequence of a plant-pathogenic phytoplasma.</title>
        <authorList>
            <person name="Oshima K."/>
            <person name="Kakizawa S."/>
            <person name="Nishigawa H."/>
            <person name="Jung H.-Y."/>
            <person name="Wei W."/>
            <person name="Suzuki S."/>
            <person name="Arashida R."/>
            <person name="Nakata D."/>
            <person name="Miyata S."/>
            <person name="Ugaki M."/>
            <person name="Namba S."/>
        </authorList>
    </citation>
    <scope>NUCLEOTIDE SEQUENCE [LARGE SCALE GENOMIC DNA]</scope>
    <source>
        <strain>OY-M</strain>
    </source>
</reference>
<feature type="chain" id="PRO_0000129592" description="Large ribosomal subunit protein uL2">
    <location>
        <begin position="1"/>
        <end position="276"/>
    </location>
</feature>
<feature type="region of interest" description="Disordered" evidence="2">
    <location>
        <begin position="221"/>
        <end position="276"/>
    </location>
</feature>
<feature type="compositionally biased region" description="Basic residues" evidence="2">
    <location>
        <begin position="252"/>
        <end position="276"/>
    </location>
</feature>
<comment type="function">
    <text evidence="1">One of the primary rRNA binding proteins. Required for association of the 30S and 50S subunits to form the 70S ribosome, for tRNA binding and peptide bond formation. It has been suggested to have peptidyltransferase activity; this is somewhat controversial. Makes several contacts with the 16S rRNA in the 70S ribosome.</text>
</comment>
<comment type="subunit">
    <text evidence="1">Part of the 50S ribosomal subunit. Forms a bridge to the 30S subunit in the 70S ribosome.</text>
</comment>
<comment type="similarity">
    <text evidence="1">Belongs to the universal ribosomal protein uL2 family.</text>
</comment>
<sequence>MAIKKYKPTTNGCRNMSVSAFSEITTQTPEKRLLVSHKDQAGRNNQGKITVRHRGGGVKRKYRLIDFKRNKDNIVGKVATIEYDPNRSANIALIHYLDGEKRYILAPKGLTVGMQIVSGKEADIKVANCLPLMNIPVGTTVHNIELKPGKGGQIARSAGSFCQIISREDKYVLLRLQSGEVRKVLGTCRATIGEIGNESYKLINYGKAGKKRFLGIRPTVRGSAMNPNDHPHGGGEGRAPIGRKSPMTPWGKKARGVKTRDRKKASNALIIRRRTK</sequence>
<protein>
    <recommendedName>
        <fullName evidence="1">Large ribosomal subunit protein uL2</fullName>
    </recommendedName>
    <alternativeName>
        <fullName evidence="3">50S ribosomal protein L2</fullName>
    </alternativeName>
</protein>
<organism>
    <name type="scientific">Onion yellows phytoplasma (strain OY-M)</name>
    <dbReference type="NCBI Taxonomy" id="262768"/>
    <lineage>
        <taxon>Bacteria</taxon>
        <taxon>Bacillati</taxon>
        <taxon>Mycoplasmatota</taxon>
        <taxon>Mollicutes</taxon>
        <taxon>Acholeplasmatales</taxon>
        <taxon>Acholeplasmataceae</taxon>
        <taxon>Candidatus Phytoplasma</taxon>
        <taxon>16SrI (Aster yellows group)</taxon>
    </lineage>
</organism>
<proteinExistence type="inferred from homology"/>
<keyword id="KW-0687">Ribonucleoprotein</keyword>
<keyword id="KW-0689">Ribosomal protein</keyword>
<keyword id="KW-0694">RNA-binding</keyword>
<keyword id="KW-0699">rRNA-binding</keyword>
<accession>P60402</accession>